<comment type="function">
    <text evidence="1">Required for pre-mRNA splicing as a component of the spliceosome. Contributes to pre-mRNA splicing after spliceosome formation and prior to the first transesterification reaction. As a component of the minor spliceosome, involved in the splicing of U12-type introns in pre-mRNAs. Also plays a role in innate antiviral response by acting as a pattern recognition receptor sensing splicing signals in viral RNA. Mechanistically, TRIM6 promotes the interaction between unanchored 'Lys-48'-polyubiquitin chains and DHX16, leading to DHX16 interaction with RIGI and ssRNA to amplify RIGI-dependent innate antiviral immune responses.</text>
</comment>
<comment type="catalytic activity">
    <reaction>
        <text>ATP + H2O = ADP + phosphate + H(+)</text>
        <dbReference type="Rhea" id="RHEA:13065"/>
        <dbReference type="ChEBI" id="CHEBI:15377"/>
        <dbReference type="ChEBI" id="CHEBI:15378"/>
        <dbReference type="ChEBI" id="CHEBI:30616"/>
        <dbReference type="ChEBI" id="CHEBI:43474"/>
        <dbReference type="ChEBI" id="CHEBI:456216"/>
        <dbReference type="EC" id="3.6.4.13"/>
    </reaction>
</comment>
<comment type="subunit">
    <text evidence="1">Component of pre-catalytic spliceosome complexes. Component of the minor spliceosome, which splices U12-type introns. Interacts with GPKOW. Interacts with TRIM6. Interacts with RIGI.</text>
</comment>
<comment type="subcellular location">
    <subcellularLocation>
        <location evidence="1">Nucleus</location>
    </subcellularLocation>
    <subcellularLocation>
        <location evidence="1">Nucleus</location>
        <location evidence="1">Nucleoplasm</location>
    </subcellularLocation>
    <subcellularLocation>
        <location evidence="1">Cytoplasm</location>
    </subcellularLocation>
</comment>
<comment type="similarity">
    <text evidence="5">Belongs to the DEAD box helicase family. DEAH subfamily. DDX16/PRP8 sub-subfamily.</text>
</comment>
<sequence>MATPAGLERWVQDELHSVLGLSERHVAQFLIGTAQRCASAEEFVQRLRDTDTLDLSGPARDFALKLWNKVPRKAVAEKPARAAEREARALLEKNRSYRLLEDSEESSEEAVGRAGSSLQKKRKKRKHLRKKRQEEEEEEEEEEVPEKGKKTTGGNKPQTEKPESEDEWERTERERLQDLEERDAFAERVRQRDKDRTRNVLERSDKKAYEEAQKRLKMAEEDRKAMVPELRKKSRREYLAKREREKLEDLEAELADEEFLFGDVELSRHERRELKYKRRVRDLAREYRAAGEQEKLEATNRYHMPEETRGQPTRAVDLVEEESGAPGEEQRRWEEARLGAASLKFGARDAASQEPKYQLVLEEEETIEFVRATQLQGDEEPAAPPAPTQAQQKESIQAVRRSLPVFPFREELLAAVANHQILIIEGETGSGKTTQIPQYLFEEGYTQKGMKIACTQPRRVAAMSVAARVAREMGVKLGNEVGYSIRFEDCTSERTVLRYMTDGMLLREFLSEPDLASYSVVMVDEAHERTLHTDILFGLIKDVARFRPELKVLVASATLDTARFSTFFDDAPVFRIPGRRFPVDIFYTKAPEADYLEACVVSVLQIHVTQPPGDILVFLTGQEEIEAACEMLQDRCRRLGSKIRELLVLPIYANLPSDMQARIFQPTPPGARKVVVATNIAETSLTIEGIIYVLDPGFCKQKSYNPRTGMESLTVTPCSKASANQRAGRAGRVAAGKCFRLYTAWAYQHELEETTVPEIQRTSLGNVVLLLKSLGIHDLMHFDFLDPPPYETLLLALEQLYALGALNHLGELTTSGRKMAELPVDPMLSKMILASEKYSCSEEILTVAAMLSVNNSIFYRPKDKVVHADNARVNFFLPGGDHLVLLNVYTQWAESGYSSQWCYENFVQFRSMRRARDVREQLEGLLERVEVGLSSCQGDYIRVRKAITAGYFYHTARLTRSGYRTVKQQQTVFIHPNSSLFEEQPRWLLYHELVLTTKEFMRQVLEIESSWLLEVAPHYYKAKELEDPHAKKMPKKTGKTREELG</sequence>
<reference key="1">
    <citation type="journal article" date="2004" name="Immunogenetics">
        <title>Nucleotide sequencing analysis of the swine 433-kb genomic segment located between the non-classical and classical SLA class I gene clusters.</title>
        <authorList>
            <person name="Shigenari A."/>
            <person name="Ando A."/>
            <person name="Renard C."/>
            <person name="Chardon P."/>
            <person name="Shiina T."/>
            <person name="Kulski J.K."/>
            <person name="Yasue H."/>
            <person name="Inoko H."/>
        </authorList>
    </citation>
    <scope>NUCLEOTIDE SEQUENCE [LARGE SCALE GENOMIC DNA]</scope>
    <source>
        <strain>Large white</strain>
    </source>
</reference>
<dbReference type="EC" id="3.6.4.13"/>
<dbReference type="EMBL" id="AB113356">
    <property type="protein sequence ID" value="BAD08431.1"/>
    <property type="molecule type" value="Genomic_DNA"/>
</dbReference>
<dbReference type="EMBL" id="AB113357">
    <property type="protein sequence ID" value="BAD08443.1"/>
    <property type="molecule type" value="Genomic_DNA"/>
</dbReference>
<dbReference type="RefSeq" id="NP_001116578.1">
    <property type="nucleotide sequence ID" value="NM_001123106.1"/>
</dbReference>
<dbReference type="SMR" id="Q767K6"/>
<dbReference type="FunCoup" id="Q767K6">
    <property type="interactions" value="2218"/>
</dbReference>
<dbReference type="STRING" id="9823.ENSSSCP00000001456"/>
<dbReference type="GlyGen" id="Q767K6">
    <property type="glycosylation" value="2 sites"/>
</dbReference>
<dbReference type="PaxDb" id="9823-ENSSSCP00000001456"/>
<dbReference type="PeptideAtlas" id="Q767K6"/>
<dbReference type="Ensembl" id="ENSSSCT00000084319.2">
    <property type="protein sequence ID" value="ENSSSCP00000065266.1"/>
    <property type="gene ID" value="ENSSSCG00000001376.7"/>
</dbReference>
<dbReference type="Ensembl" id="ENSSSCT00045068351.1">
    <property type="protein sequence ID" value="ENSSSCP00045048624.1"/>
    <property type="gene ID" value="ENSSSCG00045039260.1"/>
</dbReference>
<dbReference type="Ensembl" id="ENSSSCT00085022699">
    <property type="protein sequence ID" value="ENSSSCP00085015639"/>
    <property type="gene ID" value="ENSSSCG00085012075"/>
</dbReference>
<dbReference type="GeneID" id="100144456"/>
<dbReference type="KEGG" id="ssc:100144456"/>
<dbReference type="CTD" id="8449"/>
<dbReference type="VGNC" id="VGNC:87287">
    <property type="gene designation" value="DHX16"/>
</dbReference>
<dbReference type="eggNOG" id="KOG0923">
    <property type="taxonomic scope" value="Eukaryota"/>
</dbReference>
<dbReference type="GeneTree" id="ENSGT00940000158480"/>
<dbReference type="InParanoid" id="Q767K6"/>
<dbReference type="OMA" id="PLDPMMS"/>
<dbReference type="OrthoDB" id="10253254at2759"/>
<dbReference type="Reactome" id="R-SSC-72163">
    <property type="pathway name" value="mRNA Splicing - Major Pathway"/>
</dbReference>
<dbReference type="Proteomes" id="UP000008227">
    <property type="component" value="Chromosome 7"/>
</dbReference>
<dbReference type="Proteomes" id="UP000314985">
    <property type="component" value="Unplaced"/>
</dbReference>
<dbReference type="Proteomes" id="UP000694570">
    <property type="component" value="Unplaced"/>
</dbReference>
<dbReference type="Proteomes" id="UP000694571">
    <property type="component" value="Unplaced"/>
</dbReference>
<dbReference type="Proteomes" id="UP000694720">
    <property type="component" value="Unplaced"/>
</dbReference>
<dbReference type="Proteomes" id="UP000694722">
    <property type="component" value="Unplaced"/>
</dbReference>
<dbReference type="Proteomes" id="UP000694723">
    <property type="component" value="Unplaced"/>
</dbReference>
<dbReference type="Proteomes" id="UP000694724">
    <property type="component" value="Unplaced"/>
</dbReference>
<dbReference type="Proteomes" id="UP000694725">
    <property type="component" value="Unplaced"/>
</dbReference>
<dbReference type="Proteomes" id="UP000694726">
    <property type="component" value="Unplaced"/>
</dbReference>
<dbReference type="Proteomes" id="UP000694727">
    <property type="component" value="Unplaced"/>
</dbReference>
<dbReference type="Proteomes" id="UP000694728">
    <property type="component" value="Unplaced"/>
</dbReference>
<dbReference type="Bgee" id="ENSSSCG00000001376">
    <property type="expression patterns" value="Expressed in oocyte and 43 other cell types or tissues"/>
</dbReference>
<dbReference type="ExpressionAtlas" id="Q767K6">
    <property type="expression patterns" value="baseline and differential"/>
</dbReference>
<dbReference type="GO" id="GO:0005737">
    <property type="term" value="C:cytoplasm"/>
    <property type="evidence" value="ECO:0007669"/>
    <property type="project" value="UniProtKB-SubCell"/>
</dbReference>
<dbReference type="GO" id="GO:0005654">
    <property type="term" value="C:nucleoplasm"/>
    <property type="evidence" value="ECO:0000250"/>
    <property type="project" value="UniProtKB"/>
</dbReference>
<dbReference type="GO" id="GO:0005634">
    <property type="term" value="C:nucleus"/>
    <property type="evidence" value="ECO:0000250"/>
    <property type="project" value="UniProtKB"/>
</dbReference>
<dbReference type="GO" id="GO:0071005">
    <property type="term" value="C:U2-type precatalytic spliceosome"/>
    <property type="evidence" value="ECO:0000250"/>
    <property type="project" value="UniProtKB"/>
</dbReference>
<dbReference type="GO" id="GO:0005524">
    <property type="term" value="F:ATP binding"/>
    <property type="evidence" value="ECO:0007669"/>
    <property type="project" value="UniProtKB-KW"/>
</dbReference>
<dbReference type="GO" id="GO:0016887">
    <property type="term" value="F:ATP hydrolysis activity"/>
    <property type="evidence" value="ECO:0007669"/>
    <property type="project" value="RHEA"/>
</dbReference>
<dbReference type="GO" id="GO:0004386">
    <property type="term" value="F:helicase activity"/>
    <property type="evidence" value="ECO:0000318"/>
    <property type="project" value="GO_Central"/>
</dbReference>
<dbReference type="GO" id="GO:0060090">
    <property type="term" value="F:molecular adaptor activity"/>
    <property type="evidence" value="ECO:0007669"/>
    <property type="project" value="Ensembl"/>
</dbReference>
<dbReference type="GO" id="GO:0038187">
    <property type="term" value="F:pattern recognition receptor activity"/>
    <property type="evidence" value="ECO:0007669"/>
    <property type="project" value="Ensembl"/>
</dbReference>
<dbReference type="GO" id="GO:0003723">
    <property type="term" value="F:RNA binding"/>
    <property type="evidence" value="ECO:0000318"/>
    <property type="project" value="GO_Central"/>
</dbReference>
<dbReference type="GO" id="GO:0003724">
    <property type="term" value="F:RNA helicase activity"/>
    <property type="evidence" value="ECO:0007669"/>
    <property type="project" value="UniProtKB-EC"/>
</dbReference>
<dbReference type="GO" id="GO:0043130">
    <property type="term" value="F:ubiquitin binding"/>
    <property type="evidence" value="ECO:0007669"/>
    <property type="project" value="Ensembl"/>
</dbReference>
<dbReference type="GO" id="GO:0140374">
    <property type="term" value="P:antiviral innate immune response"/>
    <property type="evidence" value="ECO:0007669"/>
    <property type="project" value="Ensembl"/>
</dbReference>
<dbReference type="GO" id="GO:0000398">
    <property type="term" value="P:mRNA splicing, via spliceosome"/>
    <property type="evidence" value="ECO:0000250"/>
    <property type="project" value="UniProtKB"/>
</dbReference>
<dbReference type="CDD" id="cd17974">
    <property type="entry name" value="DEXHc_DHX16"/>
    <property type="match status" value="1"/>
</dbReference>
<dbReference type="CDD" id="cd18791">
    <property type="entry name" value="SF2_C_RHA"/>
    <property type="match status" value="1"/>
</dbReference>
<dbReference type="FunFam" id="1.20.120.1080:FF:000001">
    <property type="entry name" value="Pre-mRNA-splicing factor ATP-dependent RNA helicase"/>
    <property type="match status" value="1"/>
</dbReference>
<dbReference type="FunFam" id="3.40.50.300:FF:000007">
    <property type="entry name" value="Pre-mRNA-splicing factor ATP-dependent RNA helicase"/>
    <property type="match status" value="1"/>
</dbReference>
<dbReference type="FunFam" id="3.40.50.300:FF:000818">
    <property type="entry name" value="pre-mRNA-splicing factor ATP-dependent RNA helicase DHX16"/>
    <property type="match status" value="1"/>
</dbReference>
<dbReference type="Gene3D" id="1.20.120.1080">
    <property type="match status" value="1"/>
</dbReference>
<dbReference type="Gene3D" id="3.40.50.300">
    <property type="entry name" value="P-loop containing nucleotide triphosphate hydrolases"/>
    <property type="match status" value="2"/>
</dbReference>
<dbReference type="InterPro" id="IPR011709">
    <property type="entry name" value="DEAD-box_helicase_OB_fold"/>
</dbReference>
<dbReference type="InterPro" id="IPR011545">
    <property type="entry name" value="DEAD/DEAH_box_helicase_dom"/>
</dbReference>
<dbReference type="InterPro" id="IPR002464">
    <property type="entry name" value="DNA/RNA_helicase_DEAH_CS"/>
</dbReference>
<dbReference type="InterPro" id="IPR048333">
    <property type="entry name" value="HA2_WH"/>
</dbReference>
<dbReference type="InterPro" id="IPR007502">
    <property type="entry name" value="Helicase-assoc_dom"/>
</dbReference>
<dbReference type="InterPro" id="IPR014001">
    <property type="entry name" value="Helicase_ATP-bd"/>
</dbReference>
<dbReference type="InterPro" id="IPR001650">
    <property type="entry name" value="Helicase_C-like"/>
</dbReference>
<dbReference type="InterPro" id="IPR027417">
    <property type="entry name" value="P-loop_NTPase"/>
</dbReference>
<dbReference type="PANTHER" id="PTHR18934">
    <property type="entry name" value="ATP-DEPENDENT RNA HELICASE"/>
    <property type="match status" value="1"/>
</dbReference>
<dbReference type="PANTHER" id="PTHR18934:SF83">
    <property type="entry name" value="PRE-MRNA-SPLICING FACTOR ATP-DEPENDENT RNA HELICASE DHX16"/>
    <property type="match status" value="1"/>
</dbReference>
<dbReference type="Pfam" id="PF00270">
    <property type="entry name" value="DEAD"/>
    <property type="match status" value="1"/>
</dbReference>
<dbReference type="Pfam" id="PF21010">
    <property type="entry name" value="HA2_C"/>
    <property type="match status" value="1"/>
</dbReference>
<dbReference type="Pfam" id="PF04408">
    <property type="entry name" value="HA2_N"/>
    <property type="match status" value="1"/>
</dbReference>
<dbReference type="Pfam" id="PF00271">
    <property type="entry name" value="Helicase_C"/>
    <property type="match status" value="1"/>
</dbReference>
<dbReference type="Pfam" id="PF07717">
    <property type="entry name" value="OB_NTP_bind"/>
    <property type="match status" value="1"/>
</dbReference>
<dbReference type="SMART" id="SM00487">
    <property type="entry name" value="DEXDc"/>
    <property type="match status" value="1"/>
</dbReference>
<dbReference type="SMART" id="SM00847">
    <property type="entry name" value="HA2"/>
    <property type="match status" value="1"/>
</dbReference>
<dbReference type="SMART" id="SM00490">
    <property type="entry name" value="HELICc"/>
    <property type="match status" value="1"/>
</dbReference>
<dbReference type="SUPFAM" id="SSF52540">
    <property type="entry name" value="P-loop containing nucleoside triphosphate hydrolases"/>
    <property type="match status" value="1"/>
</dbReference>
<dbReference type="PROSITE" id="PS00690">
    <property type="entry name" value="DEAH_ATP_HELICASE"/>
    <property type="match status" value="1"/>
</dbReference>
<dbReference type="PROSITE" id="PS51192">
    <property type="entry name" value="HELICASE_ATP_BIND_1"/>
    <property type="match status" value="1"/>
</dbReference>
<dbReference type="PROSITE" id="PS51194">
    <property type="entry name" value="HELICASE_CTER"/>
    <property type="match status" value="1"/>
</dbReference>
<organism>
    <name type="scientific">Sus scrofa</name>
    <name type="common">Pig</name>
    <dbReference type="NCBI Taxonomy" id="9823"/>
    <lineage>
        <taxon>Eukaryota</taxon>
        <taxon>Metazoa</taxon>
        <taxon>Chordata</taxon>
        <taxon>Craniata</taxon>
        <taxon>Vertebrata</taxon>
        <taxon>Euteleostomi</taxon>
        <taxon>Mammalia</taxon>
        <taxon>Eutheria</taxon>
        <taxon>Laurasiatheria</taxon>
        <taxon>Artiodactyla</taxon>
        <taxon>Suina</taxon>
        <taxon>Suidae</taxon>
        <taxon>Sus</taxon>
    </lineage>
</organism>
<accession>Q767K6</accession>
<proteinExistence type="inferred from homology"/>
<protein>
    <recommendedName>
        <fullName>Pre-mRNA-splicing factor ATP-dependent RNA helicase DHX16</fullName>
        <ecNumber>3.6.4.13</ecNumber>
    </recommendedName>
    <alternativeName>
        <fullName>DEAH-box protein 16</fullName>
    </alternativeName>
</protein>
<evidence type="ECO:0000250" key="1">
    <source>
        <dbReference type="UniProtKB" id="O60231"/>
    </source>
</evidence>
<evidence type="ECO:0000255" key="2">
    <source>
        <dbReference type="PROSITE-ProRule" id="PRU00541"/>
    </source>
</evidence>
<evidence type="ECO:0000255" key="3">
    <source>
        <dbReference type="PROSITE-ProRule" id="PRU00542"/>
    </source>
</evidence>
<evidence type="ECO:0000256" key="4">
    <source>
        <dbReference type="SAM" id="MobiDB-lite"/>
    </source>
</evidence>
<evidence type="ECO:0000305" key="5"/>
<feature type="chain" id="PRO_0000402828" description="Pre-mRNA-splicing factor ATP-dependent RNA helicase DHX16">
    <location>
        <begin position="1"/>
        <end position="1045"/>
    </location>
</feature>
<feature type="domain" description="Helicase ATP-binding" evidence="2">
    <location>
        <begin position="413"/>
        <end position="577"/>
    </location>
</feature>
<feature type="domain" description="Helicase C-terminal" evidence="3">
    <location>
        <begin position="602"/>
        <end position="775"/>
    </location>
</feature>
<feature type="region of interest" description="Disordered" evidence="4">
    <location>
        <begin position="101"/>
        <end position="211"/>
    </location>
</feature>
<feature type="region of interest" description="Disordered" evidence="4">
    <location>
        <begin position="1026"/>
        <end position="1045"/>
    </location>
</feature>
<feature type="short sequence motif" description="DEAH box">
    <location>
        <begin position="524"/>
        <end position="527"/>
    </location>
</feature>
<feature type="compositionally biased region" description="Basic residues" evidence="4">
    <location>
        <begin position="119"/>
        <end position="131"/>
    </location>
</feature>
<feature type="compositionally biased region" description="Acidic residues" evidence="4">
    <location>
        <begin position="135"/>
        <end position="144"/>
    </location>
</feature>
<feature type="compositionally biased region" description="Basic and acidic residues" evidence="4">
    <location>
        <begin position="170"/>
        <end position="211"/>
    </location>
</feature>
<feature type="binding site" evidence="2">
    <location>
        <begin position="426"/>
        <end position="433"/>
    </location>
    <ligand>
        <name>ATP</name>
        <dbReference type="ChEBI" id="CHEBI:30616"/>
    </ligand>
</feature>
<feature type="modified residue" description="Phosphoserine" evidence="1">
    <location>
        <position position="103"/>
    </location>
</feature>
<feature type="modified residue" description="Phosphoserine" evidence="1">
    <location>
        <position position="106"/>
    </location>
</feature>
<feature type="modified residue" description="Phosphoserine" evidence="1">
    <location>
        <position position="107"/>
    </location>
</feature>
<feature type="modified residue" description="Phosphoserine" evidence="1">
    <location>
        <position position="164"/>
    </location>
</feature>
<feature type="modified residue" description="Phosphothreonine" evidence="1">
    <location>
        <position position="716"/>
    </location>
</feature>
<keyword id="KW-0067">ATP-binding</keyword>
<keyword id="KW-0963">Cytoplasm</keyword>
<keyword id="KW-0347">Helicase</keyword>
<keyword id="KW-0378">Hydrolase</keyword>
<keyword id="KW-0391">Immunity</keyword>
<keyword id="KW-0399">Innate immunity</keyword>
<keyword id="KW-0507">mRNA processing</keyword>
<keyword id="KW-0508">mRNA splicing</keyword>
<keyword id="KW-0547">Nucleotide-binding</keyword>
<keyword id="KW-0539">Nucleus</keyword>
<keyword id="KW-0597">Phosphoprotein</keyword>
<keyword id="KW-1185">Reference proteome</keyword>
<keyword id="KW-0747">Spliceosome</keyword>
<name>DHX16_PIG</name>
<gene>
    <name type="primary">DHX16</name>
    <name type="synonym">DDX16</name>
</gene>